<keyword id="KW-0687">Ribonucleoprotein</keyword>
<keyword id="KW-0689">Ribosomal protein</keyword>
<keyword id="KW-0694">RNA-binding</keyword>
<keyword id="KW-0699">rRNA-binding</keyword>
<name>RS20_BART1</name>
<comment type="function">
    <text evidence="1">Binds directly to 16S ribosomal RNA.</text>
</comment>
<comment type="similarity">
    <text evidence="1">Belongs to the bacterial ribosomal protein bS20 family.</text>
</comment>
<sequence>MANTPSARKAVRKVAARTQVNKARRSRVRTFMRKFDDALAGGDKASAEIAFKNFEPEIMRAVSKGVFHKNTAARKVSRLAKRLKALSV</sequence>
<reference key="1">
    <citation type="journal article" date="2007" name="Nat. Genet.">
        <title>Genomic analysis of Bartonella identifies type IV secretion systems as host adaptability factors.</title>
        <authorList>
            <person name="Saenz H.L."/>
            <person name="Engel P."/>
            <person name="Stoeckli M.C."/>
            <person name="Lanz C."/>
            <person name="Raddatz G."/>
            <person name="Vayssier-Taussat M."/>
            <person name="Birtles R."/>
            <person name="Schuster S.C."/>
            <person name="Dehio C."/>
        </authorList>
    </citation>
    <scope>NUCLEOTIDE SEQUENCE [LARGE SCALE GENOMIC DNA]</scope>
    <source>
        <strain>CIP 105476 / IBS 506</strain>
    </source>
</reference>
<gene>
    <name evidence="1" type="primary">rpsT</name>
    <name type="ordered locus">BT_0127</name>
</gene>
<dbReference type="EMBL" id="AM260525">
    <property type="protein sequence ID" value="CAK00616.1"/>
    <property type="molecule type" value="Genomic_DNA"/>
</dbReference>
<dbReference type="RefSeq" id="WP_012230450.1">
    <property type="nucleotide sequence ID" value="NC_010161.1"/>
</dbReference>
<dbReference type="SMR" id="A9ILY6"/>
<dbReference type="KEGG" id="btr:BT_0127"/>
<dbReference type="eggNOG" id="COG0268">
    <property type="taxonomic scope" value="Bacteria"/>
</dbReference>
<dbReference type="HOGENOM" id="CLU_160655_3_0_5"/>
<dbReference type="Proteomes" id="UP000001592">
    <property type="component" value="Chromosome"/>
</dbReference>
<dbReference type="GO" id="GO:0015935">
    <property type="term" value="C:small ribosomal subunit"/>
    <property type="evidence" value="ECO:0007669"/>
    <property type="project" value="TreeGrafter"/>
</dbReference>
<dbReference type="GO" id="GO:0070181">
    <property type="term" value="F:small ribosomal subunit rRNA binding"/>
    <property type="evidence" value="ECO:0007669"/>
    <property type="project" value="TreeGrafter"/>
</dbReference>
<dbReference type="GO" id="GO:0003735">
    <property type="term" value="F:structural constituent of ribosome"/>
    <property type="evidence" value="ECO:0007669"/>
    <property type="project" value="InterPro"/>
</dbReference>
<dbReference type="GO" id="GO:0006412">
    <property type="term" value="P:translation"/>
    <property type="evidence" value="ECO:0007669"/>
    <property type="project" value="UniProtKB-UniRule"/>
</dbReference>
<dbReference type="FunFam" id="1.20.58.110:FF:000001">
    <property type="entry name" value="30S ribosomal protein S20"/>
    <property type="match status" value="1"/>
</dbReference>
<dbReference type="Gene3D" id="1.20.58.110">
    <property type="entry name" value="Ribosomal protein S20"/>
    <property type="match status" value="1"/>
</dbReference>
<dbReference type="HAMAP" id="MF_00500">
    <property type="entry name" value="Ribosomal_bS20"/>
    <property type="match status" value="1"/>
</dbReference>
<dbReference type="InterPro" id="IPR002583">
    <property type="entry name" value="Ribosomal_bS20"/>
</dbReference>
<dbReference type="InterPro" id="IPR036510">
    <property type="entry name" value="Ribosomal_bS20_sf"/>
</dbReference>
<dbReference type="NCBIfam" id="TIGR00029">
    <property type="entry name" value="S20"/>
    <property type="match status" value="1"/>
</dbReference>
<dbReference type="PANTHER" id="PTHR33398">
    <property type="entry name" value="30S RIBOSOMAL PROTEIN S20"/>
    <property type="match status" value="1"/>
</dbReference>
<dbReference type="PANTHER" id="PTHR33398:SF1">
    <property type="entry name" value="SMALL RIBOSOMAL SUBUNIT PROTEIN BS20C"/>
    <property type="match status" value="1"/>
</dbReference>
<dbReference type="Pfam" id="PF01649">
    <property type="entry name" value="Ribosomal_S20p"/>
    <property type="match status" value="1"/>
</dbReference>
<dbReference type="SUPFAM" id="SSF46992">
    <property type="entry name" value="Ribosomal protein S20"/>
    <property type="match status" value="1"/>
</dbReference>
<organism>
    <name type="scientific">Bartonella tribocorum (strain CIP 105476 / IBS 506)</name>
    <dbReference type="NCBI Taxonomy" id="382640"/>
    <lineage>
        <taxon>Bacteria</taxon>
        <taxon>Pseudomonadati</taxon>
        <taxon>Pseudomonadota</taxon>
        <taxon>Alphaproteobacteria</taxon>
        <taxon>Hyphomicrobiales</taxon>
        <taxon>Bartonellaceae</taxon>
        <taxon>Bartonella</taxon>
    </lineage>
</organism>
<accession>A9ILY6</accession>
<protein>
    <recommendedName>
        <fullName evidence="1">Small ribosomal subunit protein bS20</fullName>
    </recommendedName>
    <alternativeName>
        <fullName evidence="2">30S ribosomal protein S20</fullName>
    </alternativeName>
</protein>
<proteinExistence type="inferred from homology"/>
<feature type="chain" id="PRO_1000081415" description="Small ribosomal subunit protein bS20">
    <location>
        <begin position="1"/>
        <end position="88"/>
    </location>
</feature>
<evidence type="ECO:0000255" key="1">
    <source>
        <dbReference type="HAMAP-Rule" id="MF_00500"/>
    </source>
</evidence>
<evidence type="ECO:0000305" key="2"/>